<evidence type="ECO:0000255" key="1">
    <source>
        <dbReference type="HAMAP-Rule" id="MF_00451"/>
    </source>
</evidence>
<feature type="chain" id="PRO_1000125004" description="Nucleoside diphosphate kinase">
    <location>
        <begin position="1"/>
        <end position="141"/>
    </location>
</feature>
<feature type="active site" description="Pros-phosphohistidine intermediate" evidence="1">
    <location>
        <position position="117"/>
    </location>
</feature>
<feature type="binding site" evidence="1">
    <location>
        <position position="11"/>
    </location>
    <ligand>
        <name>ATP</name>
        <dbReference type="ChEBI" id="CHEBI:30616"/>
    </ligand>
</feature>
<feature type="binding site" evidence="1">
    <location>
        <position position="59"/>
    </location>
    <ligand>
        <name>ATP</name>
        <dbReference type="ChEBI" id="CHEBI:30616"/>
    </ligand>
</feature>
<feature type="binding site" evidence="1">
    <location>
        <position position="87"/>
    </location>
    <ligand>
        <name>ATP</name>
        <dbReference type="ChEBI" id="CHEBI:30616"/>
    </ligand>
</feature>
<feature type="binding site" evidence="1">
    <location>
        <position position="93"/>
    </location>
    <ligand>
        <name>ATP</name>
        <dbReference type="ChEBI" id="CHEBI:30616"/>
    </ligand>
</feature>
<feature type="binding site" evidence="1">
    <location>
        <position position="104"/>
    </location>
    <ligand>
        <name>ATP</name>
        <dbReference type="ChEBI" id="CHEBI:30616"/>
    </ligand>
</feature>
<feature type="binding site" evidence="1">
    <location>
        <position position="114"/>
    </location>
    <ligand>
        <name>ATP</name>
        <dbReference type="ChEBI" id="CHEBI:30616"/>
    </ligand>
</feature>
<comment type="function">
    <text evidence="1">Major role in the synthesis of nucleoside triphosphates other than ATP. The ATP gamma phosphate is transferred to the NDP beta phosphate via a ping-pong mechanism, using a phosphorylated active-site intermediate.</text>
</comment>
<comment type="catalytic activity">
    <reaction evidence="1">
        <text>a 2'-deoxyribonucleoside 5'-diphosphate + ATP = a 2'-deoxyribonucleoside 5'-triphosphate + ADP</text>
        <dbReference type="Rhea" id="RHEA:44640"/>
        <dbReference type="ChEBI" id="CHEBI:30616"/>
        <dbReference type="ChEBI" id="CHEBI:61560"/>
        <dbReference type="ChEBI" id="CHEBI:73316"/>
        <dbReference type="ChEBI" id="CHEBI:456216"/>
        <dbReference type="EC" id="2.7.4.6"/>
    </reaction>
</comment>
<comment type="catalytic activity">
    <reaction evidence="1">
        <text>a ribonucleoside 5'-diphosphate + ATP = a ribonucleoside 5'-triphosphate + ADP</text>
        <dbReference type="Rhea" id="RHEA:18113"/>
        <dbReference type="ChEBI" id="CHEBI:30616"/>
        <dbReference type="ChEBI" id="CHEBI:57930"/>
        <dbReference type="ChEBI" id="CHEBI:61557"/>
        <dbReference type="ChEBI" id="CHEBI:456216"/>
        <dbReference type="EC" id="2.7.4.6"/>
    </reaction>
</comment>
<comment type="cofactor">
    <cofactor evidence="1">
        <name>Mg(2+)</name>
        <dbReference type="ChEBI" id="CHEBI:18420"/>
    </cofactor>
</comment>
<comment type="subunit">
    <text evidence="1">Homotetramer.</text>
</comment>
<comment type="subcellular location">
    <subcellularLocation>
        <location evidence="1">Cytoplasm</location>
    </subcellularLocation>
</comment>
<comment type="similarity">
    <text evidence="1">Belongs to the NDK family.</text>
</comment>
<gene>
    <name evidence="1" type="primary">ndk</name>
    <name type="ordered locus">Rpic_1055</name>
</gene>
<reference key="1">
    <citation type="submission" date="2008-05" db="EMBL/GenBank/DDBJ databases">
        <title>Complete sequence of chromosome 1 of Ralstonia pickettii 12J.</title>
        <authorList>
            <person name="Lucas S."/>
            <person name="Copeland A."/>
            <person name="Lapidus A."/>
            <person name="Glavina del Rio T."/>
            <person name="Dalin E."/>
            <person name="Tice H."/>
            <person name="Bruce D."/>
            <person name="Goodwin L."/>
            <person name="Pitluck S."/>
            <person name="Meincke L."/>
            <person name="Brettin T."/>
            <person name="Detter J.C."/>
            <person name="Han C."/>
            <person name="Kuske C.R."/>
            <person name="Schmutz J."/>
            <person name="Larimer F."/>
            <person name="Land M."/>
            <person name="Hauser L."/>
            <person name="Kyrpides N."/>
            <person name="Mikhailova N."/>
            <person name="Marsh T."/>
            <person name="Richardson P."/>
        </authorList>
    </citation>
    <scope>NUCLEOTIDE SEQUENCE [LARGE SCALE GENOMIC DNA]</scope>
    <source>
        <strain>12J</strain>
    </source>
</reference>
<accession>B2U9U5</accession>
<keyword id="KW-0067">ATP-binding</keyword>
<keyword id="KW-0963">Cytoplasm</keyword>
<keyword id="KW-0418">Kinase</keyword>
<keyword id="KW-0460">Magnesium</keyword>
<keyword id="KW-0479">Metal-binding</keyword>
<keyword id="KW-0546">Nucleotide metabolism</keyword>
<keyword id="KW-0547">Nucleotide-binding</keyword>
<keyword id="KW-0597">Phosphoprotein</keyword>
<keyword id="KW-0808">Transferase</keyword>
<dbReference type="EC" id="2.7.4.6" evidence="1"/>
<dbReference type="EMBL" id="CP001068">
    <property type="protein sequence ID" value="ACD26203.1"/>
    <property type="molecule type" value="Genomic_DNA"/>
</dbReference>
<dbReference type="SMR" id="B2U9U5"/>
<dbReference type="STRING" id="402626.Rpic_1055"/>
<dbReference type="KEGG" id="rpi:Rpic_1055"/>
<dbReference type="eggNOG" id="COG0105">
    <property type="taxonomic scope" value="Bacteria"/>
</dbReference>
<dbReference type="HOGENOM" id="CLU_060216_8_1_4"/>
<dbReference type="GO" id="GO:0005737">
    <property type="term" value="C:cytoplasm"/>
    <property type="evidence" value="ECO:0007669"/>
    <property type="project" value="UniProtKB-SubCell"/>
</dbReference>
<dbReference type="GO" id="GO:0005524">
    <property type="term" value="F:ATP binding"/>
    <property type="evidence" value="ECO:0007669"/>
    <property type="project" value="UniProtKB-UniRule"/>
</dbReference>
<dbReference type="GO" id="GO:0046872">
    <property type="term" value="F:metal ion binding"/>
    <property type="evidence" value="ECO:0007669"/>
    <property type="project" value="UniProtKB-KW"/>
</dbReference>
<dbReference type="GO" id="GO:0004550">
    <property type="term" value="F:nucleoside diphosphate kinase activity"/>
    <property type="evidence" value="ECO:0007669"/>
    <property type="project" value="UniProtKB-UniRule"/>
</dbReference>
<dbReference type="GO" id="GO:0006241">
    <property type="term" value="P:CTP biosynthetic process"/>
    <property type="evidence" value="ECO:0007669"/>
    <property type="project" value="UniProtKB-UniRule"/>
</dbReference>
<dbReference type="GO" id="GO:0006183">
    <property type="term" value="P:GTP biosynthetic process"/>
    <property type="evidence" value="ECO:0007669"/>
    <property type="project" value="UniProtKB-UniRule"/>
</dbReference>
<dbReference type="GO" id="GO:0006228">
    <property type="term" value="P:UTP biosynthetic process"/>
    <property type="evidence" value="ECO:0007669"/>
    <property type="project" value="UniProtKB-UniRule"/>
</dbReference>
<dbReference type="CDD" id="cd04413">
    <property type="entry name" value="NDPk_I"/>
    <property type="match status" value="1"/>
</dbReference>
<dbReference type="FunFam" id="3.30.70.141:FF:000001">
    <property type="entry name" value="Nucleoside diphosphate kinase"/>
    <property type="match status" value="1"/>
</dbReference>
<dbReference type="Gene3D" id="3.30.70.141">
    <property type="entry name" value="Nucleoside diphosphate kinase-like domain"/>
    <property type="match status" value="1"/>
</dbReference>
<dbReference type="HAMAP" id="MF_00451">
    <property type="entry name" value="NDP_kinase"/>
    <property type="match status" value="1"/>
</dbReference>
<dbReference type="InterPro" id="IPR034907">
    <property type="entry name" value="NDK-like_dom"/>
</dbReference>
<dbReference type="InterPro" id="IPR036850">
    <property type="entry name" value="NDK-like_dom_sf"/>
</dbReference>
<dbReference type="InterPro" id="IPR001564">
    <property type="entry name" value="Nucleoside_diP_kinase"/>
</dbReference>
<dbReference type="NCBIfam" id="NF001908">
    <property type="entry name" value="PRK00668.1"/>
    <property type="match status" value="1"/>
</dbReference>
<dbReference type="PANTHER" id="PTHR46161">
    <property type="entry name" value="NUCLEOSIDE DIPHOSPHATE KINASE"/>
    <property type="match status" value="1"/>
</dbReference>
<dbReference type="PANTHER" id="PTHR46161:SF3">
    <property type="entry name" value="NUCLEOSIDE DIPHOSPHATE KINASE DDB_G0292928-RELATED"/>
    <property type="match status" value="1"/>
</dbReference>
<dbReference type="Pfam" id="PF00334">
    <property type="entry name" value="NDK"/>
    <property type="match status" value="1"/>
</dbReference>
<dbReference type="PRINTS" id="PR01243">
    <property type="entry name" value="NUCDPKINASE"/>
</dbReference>
<dbReference type="SMART" id="SM00562">
    <property type="entry name" value="NDK"/>
    <property type="match status" value="1"/>
</dbReference>
<dbReference type="SUPFAM" id="SSF54919">
    <property type="entry name" value="Nucleoside diphosphate kinase, NDK"/>
    <property type="match status" value="1"/>
</dbReference>
<dbReference type="PROSITE" id="PS51374">
    <property type="entry name" value="NDPK_LIKE"/>
    <property type="match status" value="1"/>
</dbReference>
<proteinExistence type="inferred from homology"/>
<name>NDK_RALPJ</name>
<protein>
    <recommendedName>
        <fullName evidence="1">Nucleoside diphosphate kinase</fullName>
        <shortName evidence="1">NDK</shortName>
        <shortName evidence="1">NDP kinase</shortName>
        <ecNumber evidence="1">2.7.4.6</ecNumber>
    </recommendedName>
    <alternativeName>
        <fullName evidence="1">Nucleoside-2-P kinase</fullName>
    </alternativeName>
</protein>
<organism>
    <name type="scientific">Ralstonia pickettii (strain 12J)</name>
    <dbReference type="NCBI Taxonomy" id="402626"/>
    <lineage>
        <taxon>Bacteria</taxon>
        <taxon>Pseudomonadati</taxon>
        <taxon>Pseudomonadota</taxon>
        <taxon>Betaproteobacteria</taxon>
        <taxon>Burkholderiales</taxon>
        <taxon>Burkholderiaceae</taxon>
        <taxon>Ralstonia</taxon>
    </lineage>
</organism>
<sequence length="141" mass="15330">MALERTLSIIKPDAVAKNVIGQIYARFEGAGLKIVAAKMIHLSRAEAEQFYAVHKERPFFKDLVDFMISGPVMVQALEGENAIAKNRDLMGATDPKKAEKGTIRADFADSIDANAVHGSDAAETAAVEVAFFFPGLNIYSR</sequence>